<comment type="function">
    <text evidence="1">Endonuclease IV plays a role in DNA repair. It cleaves phosphodiester bonds at apurinic or apyrimidinic (AP) sites, generating a 3'-hydroxyl group and a 5'-terminal sugar phosphate.</text>
</comment>
<comment type="catalytic activity">
    <reaction evidence="1">
        <text>Endonucleolytic cleavage to 5'-phosphooligonucleotide end-products.</text>
        <dbReference type="EC" id="3.1.21.2"/>
    </reaction>
</comment>
<comment type="cofactor">
    <cofactor evidence="1">
        <name>Zn(2+)</name>
        <dbReference type="ChEBI" id="CHEBI:29105"/>
    </cofactor>
    <text evidence="1">Binds 3 Zn(2+) ions.</text>
</comment>
<comment type="similarity">
    <text evidence="1">Belongs to the AP endonuclease 2 family.</text>
</comment>
<name>END4_SULNB</name>
<evidence type="ECO:0000255" key="1">
    <source>
        <dbReference type="HAMAP-Rule" id="MF_00152"/>
    </source>
</evidence>
<protein>
    <recommendedName>
        <fullName evidence="1">Probable endonuclease 4</fullName>
        <ecNumber evidence="1">3.1.21.2</ecNumber>
    </recommendedName>
    <alternativeName>
        <fullName evidence="1">Endodeoxyribonuclease IV</fullName>
    </alternativeName>
    <alternativeName>
        <fullName evidence="1">Endonuclease IV</fullName>
    </alternativeName>
</protein>
<feature type="chain" id="PRO_1000011342" description="Probable endonuclease 4">
    <location>
        <begin position="1"/>
        <end position="296"/>
    </location>
</feature>
<feature type="binding site" evidence="1">
    <location>
        <position position="69"/>
    </location>
    <ligand>
        <name>Zn(2+)</name>
        <dbReference type="ChEBI" id="CHEBI:29105"/>
        <label>1</label>
    </ligand>
</feature>
<feature type="binding site" evidence="1">
    <location>
        <position position="109"/>
    </location>
    <ligand>
        <name>Zn(2+)</name>
        <dbReference type="ChEBI" id="CHEBI:29105"/>
        <label>1</label>
    </ligand>
</feature>
<feature type="binding site" evidence="1">
    <location>
        <position position="160"/>
    </location>
    <ligand>
        <name>Zn(2+)</name>
        <dbReference type="ChEBI" id="CHEBI:29105"/>
        <label>1</label>
    </ligand>
</feature>
<feature type="binding site" evidence="1">
    <location>
        <position position="160"/>
    </location>
    <ligand>
        <name>Zn(2+)</name>
        <dbReference type="ChEBI" id="CHEBI:29105"/>
        <label>2</label>
    </ligand>
</feature>
<feature type="binding site" evidence="1">
    <location>
        <position position="194"/>
    </location>
    <ligand>
        <name>Zn(2+)</name>
        <dbReference type="ChEBI" id="CHEBI:29105"/>
        <label>2</label>
    </ligand>
</feature>
<feature type="binding site" evidence="1">
    <location>
        <position position="197"/>
    </location>
    <ligand>
        <name>Zn(2+)</name>
        <dbReference type="ChEBI" id="CHEBI:29105"/>
        <label>3</label>
    </ligand>
</feature>
<feature type="binding site" evidence="1">
    <location>
        <position position="231"/>
    </location>
    <ligand>
        <name>Zn(2+)</name>
        <dbReference type="ChEBI" id="CHEBI:29105"/>
        <label>2</label>
    </ligand>
</feature>
<feature type="binding site" evidence="1">
    <location>
        <position position="244"/>
    </location>
    <ligand>
        <name>Zn(2+)</name>
        <dbReference type="ChEBI" id="CHEBI:29105"/>
        <label>3</label>
    </ligand>
</feature>
<feature type="binding site" evidence="1">
    <location>
        <position position="246"/>
    </location>
    <ligand>
        <name>Zn(2+)</name>
        <dbReference type="ChEBI" id="CHEBI:29105"/>
        <label>3</label>
    </ligand>
</feature>
<feature type="binding site" evidence="1">
    <location>
        <position position="276"/>
    </location>
    <ligand>
        <name>Zn(2+)</name>
        <dbReference type="ChEBI" id="CHEBI:29105"/>
        <label>2</label>
    </ligand>
</feature>
<keyword id="KW-0227">DNA damage</keyword>
<keyword id="KW-0234">DNA repair</keyword>
<keyword id="KW-0255">Endonuclease</keyword>
<keyword id="KW-0378">Hydrolase</keyword>
<keyword id="KW-0479">Metal-binding</keyword>
<keyword id="KW-0540">Nuclease</keyword>
<keyword id="KW-0862">Zinc</keyword>
<organism>
    <name type="scientific">Sulfurovum sp. (strain NBC37-1)</name>
    <dbReference type="NCBI Taxonomy" id="387093"/>
    <lineage>
        <taxon>Bacteria</taxon>
        <taxon>Pseudomonadati</taxon>
        <taxon>Campylobacterota</taxon>
        <taxon>Epsilonproteobacteria</taxon>
        <taxon>Campylobacterales</taxon>
        <taxon>Sulfurovaceae</taxon>
        <taxon>Sulfurovum</taxon>
    </lineage>
</organism>
<sequence>MKFVGAHVSASGGVDNAPLNAMAIGAKAFAVFAKNQRQWVAKPLEEKTIEAFKKNLETAGILPKHVLPHDSYLINLGHPEEEKLEKSRAAFIDELERCNQLGLDKLNFHPGSHLVKIPKKDPEYHEKLMEAELHCLDVIAESMNLAIEATKGSDVKLVIENTAGQGTNLGYKFEHLAHLIEKVEDKSRVGVCLDTCHTFTAGYDLRTREAYDETMDAFERIVGFEYLMGMHINDSKPKLGSRVDRHASLGQGEIGWDAFCFIMNDPRMDDIPLILETIDESLWPEEIKALYALVKK</sequence>
<proteinExistence type="inferred from homology"/>
<dbReference type="EC" id="3.1.21.2" evidence="1"/>
<dbReference type="EMBL" id="AP009179">
    <property type="protein sequence ID" value="BAF73189.1"/>
    <property type="molecule type" value="Genomic_DNA"/>
</dbReference>
<dbReference type="RefSeq" id="WP_012084027.1">
    <property type="nucleotide sequence ID" value="NC_009663.1"/>
</dbReference>
<dbReference type="SMR" id="A6QCI0"/>
<dbReference type="STRING" id="387093.SUN_2249"/>
<dbReference type="KEGG" id="sun:SUN_2249"/>
<dbReference type="eggNOG" id="COG0648">
    <property type="taxonomic scope" value="Bacteria"/>
</dbReference>
<dbReference type="HOGENOM" id="CLU_025885_0_4_7"/>
<dbReference type="OrthoDB" id="9805666at2"/>
<dbReference type="Proteomes" id="UP000006378">
    <property type="component" value="Chromosome"/>
</dbReference>
<dbReference type="GO" id="GO:0008833">
    <property type="term" value="F:deoxyribonuclease IV (phage-T4-induced) activity"/>
    <property type="evidence" value="ECO:0007669"/>
    <property type="project" value="UniProtKB-UniRule"/>
</dbReference>
<dbReference type="GO" id="GO:0003677">
    <property type="term" value="F:DNA binding"/>
    <property type="evidence" value="ECO:0007669"/>
    <property type="project" value="InterPro"/>
</dbReference>
<dbReference type="GO" id="GO:0003906">
    <property type="term" value="F:DNA-(apurinic or apyrimidinic site) endonuclease activity"/>
    <property type="evidence" value="ECO:0007669"/>
    <property type="project" value="TreeGrafter"/>
</dbReference>
<dbReference type="GO" id="GO:0008081">
    <property type="term" value="F:phosphoric diester hydrolase activity"/>
    <property type="evidence" value="ECO:0007669"/>
    <property type="project" value="TreeGrafter"/>
</dbReference>
<dbReference type="GO" id="GO:0008270">
    <property type="term" value="F:zinc ion binding"/>
    <property type="evidence" value="ECO:0007669"/>
    <property type="project" value="UniProtKB-UniRule"/>
</dbReference>
<dbReference type="GO" id="GO:0006284">
    <property type="term" value="P:base-excision repair"/>
    <property type="evidence" value="ECO:0007669"/>
    <property type="project" value="TreeGrafter"/>
</dbReference>
<dbReference type="CDD" id="cd00019">
    <property type="entry name" value="AP2Ec"/>
    <property type="match status" value="1"/>
</dbReference>
<dbReference type="FunFam" id="3.20.20.150:FF:000001">
    <property type="entry name" value="Probable endonuclease 4"/>
    <property type="match status" value="1"/>
</dbReference>
<dbReference type="Gene3D" id="3.20.20.150">
    <property type="entry name" value="Divalent-metal-dependent TIM barrel enzymes"/>
    <property type="match status" value="1"/>
</dbReference>
<dbReference type="HAMAP" id="MF_00152">
    <property type="entry name" value="Nfo"/>
    <property type="match status" value="1"/>
</dbReference>
<dbReference type="InterPro" id="IPR001719">
    <property type="entry name" value="AP_endonuc_2"/>
</dbReference>
<dbReference type="InterPro" id="IPR018246">
    <property type="entry name" value="AP_endonuc_F2_Zn_BS"/>
</dbReference>
<dbReference type="InterPro" id="IPR036237">
    <property type="entry name" value="Xyl_isomerase-like_sf"/>
</dbReference>
<dbReference type="InterPro" id="IPR013022">
    <property type="entry name" value="Xyl_isomerase-like_TIM-brl"/>
</dbReference>
<dbReference type="NCBIfam" id="TIGR00587">
    <property type="entry name" value="nfo"/>
    <property type="match status" value="1"/>
</dbReference>
<dbReference type="NCBIfam" id="NF002199">
    <property type="entry name" value="PRK01060.1-4"/>
    <property type="match status" value="1"/>
</dbReference>
<dbReference type="PANTHER" id="PTHR21445:SF0">
    <property type="entry name" value="APURINIC-APYRIMIDINIC ENDONUCLEASE"/>
    <property type="match status" value="1"/>
</dbReference>
<dbReference type="PANTHER" id="PTHR21445">
    <property type="entry name" value="ENDONUCLEASE IV ENDODEOXYRIBONUCLEASE IV"/>
    <property type="match status" value="1"/>
</dbReference>
<dbReference type="Pfam" id="PF01261">
    <property type="entry name" value="AP_endonuc_2"/>
    <property type="match status" value="1"/>
</dbReference>
<dbReference type="SMART" id="SM00518">
    <property type="entry name" value="AP2Ec"/>
    <property type="match status" value="1"/>
</dbReference>
<dbReference type="SUPFAM" id="SSF51658">
    <property type="entry name" value="Xylose isomerase-like"/>
    <property type="match status" value="1"/>
</dbReference>
<dbReference type="PROSITE" id="PS00729">
    <property type="entry name" value="AP_NUCLEASE_F2_1"/>
    <property type="match status" value="1"/>
</dbReference>
<dbReference type="PROSITE" id="PS00730">
    <property type="entry name" value="AP_NUCLEASE_F2_2"/>
    <property type="match status" value="1"/>
</dbReference>
<dbReference type="PROSITE" id="PS00731">
    <property type="entry name" value="AP_NUCLEASE_F2_3"/>
    <property type="match status" value="1"/>
</dbReference>
<dbReference type="PROSITE" id="PS51432">
    <property type="entry name" value="AP_NUCLEASE_F2_4"/>
    <property type="match status" value="1"/>
</dbReference>
<gene>
    <name evidence="1" type="primary">nfo</name>
    <name type="ordered locus">SUN_2249</name>
</gene>
<reference key="1">
    <citation type="journal article" date="2007" name="Proc. Natl. Acad. Sci. U.S.A.">
        <title>Deep-sea vent epsilon-proteobacterial genomes provide insights into emergence of pathogens.</title>
        <authorList>
            <person name="Nakagawa S."/>
            <person name="Takaki Y."/>
            <person name="Shimamura S."/>
            <person name="Reysenbach A.-L."/>
            <person name="Takai K."/>
            <person name="Horikoshi K."/>
        </authorList>
    </citation>
    <scope>NUCLEOTIDE SEQUENCE [LARGE SCALE GENOMIC DNA]</scope>
    <source>
        <strain>NBC37-1</strain>
    </source>
</reference>
<accession>A6QCI0</accession>